<comment type="function">
    <text evidence="1">Required for maturation of 30S ribosomal subunits.</text>
</comment>
<comment type="subcellular location">
    <subcellularLocation>
        <location evidence="1">Cytoplasm</location>
    </subcellularLocation>
</comment>
<comment type="similarity">
    <text evidence="1">Belongs to the RimP family.</text>
</comment>
<feature type="chain" id="PRO_0000181920" description="Ribosome maturation factor RimP">
    <location>
        <begin position="1"/>
        <end position="155"/>
    </location>
</feature>
<dbReference type="EMBL" id="BA000017">
    <property type="protein sequence ID" value="BAB57427.1"/>
    <property type="molecule type" value="Genomic_DNA"/>
</dbReference>
<dbReference type="RefSeq" id="WP_000036633.1">
    <property type="nucleotide sequence ID" value="NC_002758.2"/>
</dbReference>
<dbReference type="SMR" id="P67220"/>
<dbReference type="KEGG" id="sav:SAV1265"/>
<dbReference type="HOGENOM" id="CLU_070525_2_0_9"/>
<dbReference type="PhylomeDB" id="P67220"/>
<dbReference type="Proteomes" id="UP000002481">
    <property type="component" value="Chromosome"/>
</dbReference>
<dbReference type="GO" id="GO:0005829">
    <property type="term" value="C:cytosol"/>
    <property type="evidence" value="ECO:0007669"/>
    <property type="project" value="TreeGrafter"/>
</dbReference>
<dbReference type="GO" id="GO:0000028">
    <property type="term" value="P:ribosomal small subunit assembly"/>
    <property type="evidence" value="ECO:0007669"/>
    <property type="project" value="TreeGrafter"/>
</dbReference>
<dbReference type="GO" id="GO:0006412">
    <property type="term" value="P:translation"/>
    <property type="evidence" value="ECO:0007669"/>
    <property type="project" value="TreeGrafter"/>
</dbReference>
<dbReference type="CDD" id="cd01734">
    <property type="entry name" value="YlxS_C"/>
    <property type="match status" value="1"/>
</dbReference>
<dbReference type="FunFam" id="3.30.300.70:FF:000001">
    <property type="entry name" value="Ribosome maturation factor RimP"/>
    <property type="match status" value="1"/>
</dbReference>
<dbReference type="Gene3D" id="2.30.30.180">
    <property type="entry name" value="Ribosome maturation factor RimP, C-terminal domain"/>
    <property type="match status" value="1"/>
</dbReference>
<dbReference type="Gene3D" id="3.30.300.70">
    <property type="entry name" value="RimP-like superfamily, N-terminal"/>
    <property type="match status" value="1"/>
</dbReference>
<dbReference type="HAMAP" id="MF_01077">
    <property type="entry name" value="RimP"/>
    <property type="match status" value="1"/>
</dbReference>
<dbReference type="InterPro" id="IPR003728">
    <property type="entry name" value="Ribosome_maturation_RimP"/>
</dbReference>
<dbReference type="InterPro" id="IPR028998">
    <property type="entry name" value="RimP_C"/>
</dbReference>
<dbReference type="InterPro" id="IPR036847">
    <property type="entry name" value="RimP_C_sf"/>
</dbReference>
<dbReference type="InterPro" id="IPR028989">
    <property type="entry name" value="RimP_N"/>
</dbReference>
<dbReference type="InterPro" id="IPR035956">
    <property type="entry name" value="RimP_N_sf"/>
</dbReference>
<dbReference type="NCBIfam" id="NF000928">
    <property type="entry name" value="PRK00092.1-2"/>
    <property type="match status" value="1"/>
</dbReference>
<dbReference type="PANTHER" id="PTHR33867">
    <property type="entry name" value="RIBOSOME MATURATION FACTOR RIMP"/>
    <property type="match status" value="1"/>
</dbReference>
<dbReference type="PANTHER" id="PTHR33867:SF1">
    <property type="entry name" value="RIBOSOME MATURATION FACTOR RIMP"/>
    <property type="match status" value="1"/>
</dbReference>
<dbReference type="Pfam" id="PF17384">
    <property type="entry name" value="DUF150_C"/>
    <property type="match status" value="1"/>
</dbReference>
<dbReference type="Pfam" id="PF02576">
    <property type="entry name" value="RimP_N"/>
    <property type="match status" value="1"/>
</dbReference>
<dbReference type="SUPFAM" id="SSF74942">
    <property type="entry name" value="YhbC-like, C-terminal domain"/>
    <property type="match status" value="1"/>
</dbReference>
<dbReference type="SUPFAM" id="SSF75420">
    <property type="entry name" value="YhbC-like, N-terminal domain"/>
    <property type="match status" value="1"/>
</dbReference>
<accession>P67220</accession>
<accession>Q99UK7</accession>
<keyword id="KW-0963">Cytoplasm</keyword>
<keyword id="KW-0690">Ribosome biogenesis</keyword>
<gene>
    <name evidence="1" type="primary">rimP</name>
    <name type="ordered locus">SAV1265</name>
</gene>
<sequence length="155" mass="17627">MSKITEQVEVIVQPIMEDLNFELVDVEYVKEGRDHFLRISIDKEGGVDLNDCTLASEKISEAMDANDPIPEMYYLDVASPGAERPIKKEQDFQNAITKPVFVSLYVPIEGEKEWLGILQEVNNETIVVQVKIKARTKDIEIPRDKIAKARHAVMI</sequence>
<reference key="1">
    <citation type="journal article" date="2001" name="Lancet">
        <title>Whole genome sequencing of meticillin-resistant Staphylococcus aureus.</title>
        <authorList>
            <person name="Kuroda M."/>
            <person name="Ohta T."/>
            <person name="Uchiyama I."/>
            <person name="Baba T."/>
            <person name="Yuzawa H."/>
            <person name="Kobayashi I."/>
            <person name="Cui L."/>
            <person name="Oguchi A."/>
            <person name="Aoki K."/>
            <person name="Nagai Y."/>
            <person name="Lian J.-Q."/>
            <person name="Ito T."/>
            <person name="Kanamori M."/>
            <person name="Matsumaru H."/>
            <person name="Maruyama A."/>
            <person name="Murakami H."/>
            <person name="Hosoyama A."/>
            <person name="Mizutani-Ui Y."/>
            <person name="Takahashi N.K."/>
            <person name="Sawano T."/>
            <person name="Inoue R."/>
            <person name="Kaito C."/>
            <person name="Sekimizu K."/>
            <person name="Hirakawa H."/>
            <person name="Kuhara S."/>
            <person name="Goto S."/>
            <person name="Yabuzaki J."/>
            <person name="Kanehisa M."/>
            <person name="Yamashita A."/>
            <person name="Oshima K."/>
            <person name="Furuya K."/>
            <person name="Yoshino C."/>
            <person name="Shiba T."/>
            <person name="Hattori M."/>
            <person name="Ogasawara N."/>
            <person name="Hayashi H."/>
            <person name="Hiramatsu K."/>
        </authorList>
    </citation>
    <scope>NUCLEOTIDE SEQUENCE [LARGE SCALE GENOMIC DNA]</scope>
    <source>
        <strain>Mu50 / ATCC 700699</strain>
    </source>
</reference>
<protein>
    <recommendedName>
        <fullName evidence="1">Ribosome maturation factor RimP</fullName>
    </recommendedName>
</protein>
<proteinExistence type="inferred from homology"/>
<organism>
    <name type="scientific">Staphylococcus aureus (strain Mu50 / ATCC 700699)</name>
    <dbReference type="NCBI Taxonomy" id="158878"/>
    <lineage>
        <taxon>Bacteria</taxon>
        <taxon>Bacillati</taxon>
        <taxon>Bacillota</taxon>
        <taxon>Bacilli</taxon>
        <taxon>Bacillales</taxon>
        <taxon>Staphylococcaceae</taxon>
        <taxon>Staphylococcus</taxon>
    </lineage>
</organism>
<evidence type="ECO:0000255" key="1">
    <source>
        <dbReference type="HAMAP-Rule" id="MF_01077"/>
    </source>
</evidence>
<name>RIMP_STAAM</name>